<gene>
    <name type="ordered locus">Rv3403c</name>
    <name type="ORF">MTCY78.25</name>
</gene>
<comment type="subcellular location">
    <subcellularLocation>
        <location evidence="2">Cell membrane</location>
        <topology evidence="2">Multi-pass membrane protein</topology>
    </subcellularLocation>
</comment>
<organism>
    <name type="scientific">Mycobacterium tuberculosis (strain ATCC 25618 / H37Rv)</name>
    <dbReference type="NCBI Taxonomy" id="83332"/>
    <lineage>
        <taxon>Bacteria</taxon>
        <taxon>Bacillati</taxon>
        <taxon>Actinomycetota</taxon>
        <taxon>Actinomycetes</taxon>
        <taxon>Mycobacteriales</taxon>
        <taxon>Mycobacteriaceae</taxon>
        <taxon>Mycobacterium</taxon>
        <taxon>Mycobacterium tuberculosis complex</taxon>
    </lineage>
</organism>
<protein>
    <recommendedName>
        <fullName>Uncharacterized protein Rv3403c</fullName>
    </recommendedName>
</protein>
<keyword id="KW-0002">3D-structure</keyword>
<keyword id="KW-1003">Cell membrane</keyword>
<keyword id="KW-0472">Membrane</keyword>
<keyword id="KW-1185">Reference proteome</keyword>
<keyword id="KW-0812">Transmembrane</keyword>
<keyword id="KW-1133">Transmembrane helix</keyword>
<feature type="chain" id="PRO_0000104123" description="Uncharacterized protein Rv3403c">
    <location>
        <begin position="1"/>
        <end position="533"/>
    </location>
</feature>
<feature type="transmembrane region" description="Helical" evidence="1">
    <location>
        <begin position="1"/>
        <end position="21"/>
    </location>
</feature>
<feature type="transmembrane region" description="Helical" evidence="1">
    <location>
        <begin position="135"/>
        <end position="155"/>
    </location>
</feature>
<feature type="transmembrane region" description="Helical" evidence="1">
    <location>
        <begin position="193"/>
        <end position="213"/>
    </location>
</feature>
<feature type="transmembrane region" description="Helical" evidence="1">
    <location>
        <begin position="472"/>
        <end position="492"/>
    </location>
</feature>
<accession>P9WKZ5</accession>
<accession>L0TFI3</accession>
<accession>P65071</accession>
<accession>Q50722</accession>
<evidence type="ECO:0000255" key="1"/>
<evidence type="ECO:0000305" key="2"/>
<sequence length="533" mass="57880">MLAFPYLMTMITPPTFDVAFIGSGAACSMTLLEMADALLSSPSASPKLRIAVVERDEQFWCGIPYGQRSSIGSLAIQKLDDFADEPEKAAYRIWLEQNKQRWLAFFQAEGGAAAARWICDNRDALDGNQWGELYLPRFLFGVFLSEQMIAAIAALGERDLAEIVTIRAEAMSAHSADGHYRIGLRPSGNGPTAIAAGKVVVAIGSPPTKAILASDSEPAFTYINDFYSPGGESNVARLRDSLDRVESWEKRNVLVVGSNATSLEALYLMRHDARIRARVRSITVISRSGVLPYMICNQPPEFDFPRLRTLLCTEAIAAADLMSAIRDDLATAEERSLNLADLYDAVAALFGQALHKMDLVQQEEFFCVHGMNFTKLVRRAGRDCRQASEELAADGTLSLLAGEVLRVDACASGQPFATMTYRAAGAEHTHPVPFAAVVNCGGFEELDTCSSPFLVSAMQNGLCRPNRTNRGLLVNDDFEASPGFCVIGPLVGGNFTPKIRFWHVESAPRVRSLAKSLAASLLASLQPVALAPC</sequence>
<dbReference type="EMBL" id="AL123456">
    <property type="protein sequence ID" value="CCP46225.1"/>
    <property type="molecule type" value="Genomic_DNA"/>
</dbReference>
<dbReference type="PIR" id="H70735">
    <property type="entry name" value="H70735"/>
</dbReference>
<dbReference type="RefSeq" id="NP_217920.1">
    <property type="nucleotide sequence ID" value="NC_000962.3"/>
</dbReference>
<dbReference type="RefSeq" id="WP_003417969.1">
    <property type="nucleotide sequence ID" value="NZ_NVQJ01000027.1"/>
</dbReference>
<dbReference type="PDB" id="7ZQJ">
    <property type="method" value="X-ray"/>
    <property type="resolution" value="2.25 A"/>
    <property type="chains" value="F=8-16"/>
</dbReference>
<dbReference type="PDBsum" id="7ZQJ"/>
<dbReference type="SMR" id="P9WKZ5"/>
<dbReference type="STRING" id="83332.Rv3403c"/>
<dbReference type="PaxDb" id="83332-Rv3403c"/>
<dbReference type="DNASU" id="887907"/>
<dbReference type="GeneID" id="887907"/>
<dbReference type="KEGG" id="mtu:Rv3403c"/>
<dbReference type="KEGG" id="mtv:RVBD_3403c"/>
<dbReference type="TubercuList" id="Rv3403c"/>
<dbReference type="eggNOG" id="COG4529">
    <property type="taxonomic scope" value="Bacteria"/>
</dbReference>
<dbReference type="InParanoid" id="P9WKZ5"/>
<dbReference type="OrthoDB" id="101972at2"/>
<dbReference type="PhylomeDB" id="P9WKZ5"/>
<dbReference type="Proteomes" id="UP000001584">
    <property type="component" value="Chromosome"/>
</dbReference>
<dbReference type="GO" id="GO:0005886">
    <property type="term" value="C:plasma membrane"/>
    <property type="evidence" value="ECO:0007669"/>
    <property type="project" value="UniProtKB-SubCell"/>
</dbReference>
<dbReference type="InterPro" id="IPR036188">
    <property type="entry name" value="FAD/NAD-bd_sf"/>
</dbReference>
<dbReference type="InterPro" id="IPR038732">
    <property type="entry name" value="HpyO/CreE_NAD-binding"/>
</dbReference>
<dbReference type="InterPro" id="IPR052189">
    <property type="entry name" value="L-asp_N-monooxygenase_NS-form"/>
</dbReference>
<dbReference type="PANTHER" id="PTHR40254">
    <property type="entry name" value="BLR0577 PROTEIN"/>
    <property type="match status" value="1"/>
</dbReference>
<dbReference type="PANTHER" id="PTHR40254:SF1">
    <property type="entry name" value="BLR0577 PROTEIN"/>
    <property type="match status" value="1"/>
</dbReference>
<dbReference type="Pfam" id="PF13454">
    <property type="entry name" value="NAD_binding_9"/>
    <property type="match status" value="1"/>
</dbReference>
<dbReference type="SUPFAM" id="SSF51905">
    <property type="entry name" value="FAD/NAD(P)-binding domain"/>
    <property type="match status" value="1"/>
</dbReference>
<name>Y3403_MYCTU</name>
<reference key="1">
    <citation type="journal article" date="1998" name="Nature">
        <title>Deciphering the biology of Mycobacterium tuberculosis from the complete genome sequence.</title>
        <authorList>
            <person name="Cole S.T."/>
            <person name="Brosch R."/>
            <person name="Parkhill J."/>
            <person name="Garnier T."/>
            <person name="Churcher C.M."/>
            <person name="Harris D.E."/>
            <person name="Gordon S.V."/>
            <person name="Eiglmeier K."/>
            <person name="Gas S."/>
            <person name="Barry C.E. III"/>
            <person name="Tekaia F."/>
            <person name="Badcock K."/>
            <person name="Basham D."/>
            <person name="Brown D."/>
            <person name="Chillingworth T."/>
            <person name="Connor R."/>
            <person name="Davies R.M."/>
            <person name="Devlin K."/>
            <person name="Feltwell T."/>
            <person name="Gentles S."/>
            <person name="Hamlin N."/>
            <person name="Holroyd S."/>
            <person name="Hornsby T."/>
            <person name="Jagels K."/>
            <person name="Krogh A."/>
            <person name="McLean J."/>
            <person name="Moule S."/>
            <person name="Murphy L.D."/>
            <person name="Oliver S."/>
            <person name="Osborne J."/>
            <person name="Quail M.A."/>
            <person name="Rajandream M.A."/>
            <person name="Rogers J."/>
            <person name="Rutter S."/>
            <person name="Seeger K."/>
            <person name="Skelton S."/>
            <person name="Squares S."/>
            <person name="Squares R."/>
            <person name="Sulston J.E."/>
            <person name="Taylor K."/>
            <person name="Whitehead S."/>
            <person name="Barrell B.G."/>
        </authorList>
    </citation>
    <scope>NUCLEOTIDE SEQUENCE [LARGE SCALE GENOMIC DNA]</scope>
    <source>
        <strain>ATCC 25618 / H37Rv</strain>
    </source>
</reference>
<proteinExistence type="evidence at protein level"/>